<proteinExistence type="inferred from homology"/>
<name>MIAA_STRTD</name>
<organism>
    <name type="scientific">Streptococcus thermophilus (strain ATCC BAA-491 / LMD-9)</name>
    <dbReference type="NCBI Taxonomy" id="322159"/>
    <lineage>
        <taxon>Bacteria</taxon>
        <taxon>Bacillati</taxon>
        <taxon>Bacillota</taxon>
        <taxon>Bacilli</taxon>
        <taxon>Lactobacillales</taxon>
        <taxon>Streptococcaceae</taxon>
        <taxon>Streptococcus</taxon>
    </lineage>
</organism>
<comment type="function">
    <text evidence="1">Catalyzes the transfer of a dimethylallyl group onto the adenine at position 37 in tRNAs that read codons beginning with uridine, leading to the formation of N6-(dimethylallyl)adenosine (i(6)A).</text>
</comment>
<comment type="catalytic activity">
    <reaction evidence="1">
        <text>adenosine(37) in tRNA + dimethylallyl diphosphate = N(6)-dimethylallyladenosine(37) in tRNA + diphosphate</text>
        <dbReference type="Rhea" id="RHEA:26482"/>
        <dbReference type="Rhea" id="RHEA-COMP:10162"/>
        <dbReference type="Rhea" id="RHEA-COMP:10375"/>
        <dbReference type="ChEBI" id="CHEBI:33019"/>
        <dbReference type="ChEBI" id="CHEBI:57623"/>
        <dbReference type="ChEBI" id="CHEBI:74411"/>
        <dbReference type="ChEBI" id="CHEBI:74415"/>
        <dbReference type="EC" id="2.5.1.75"/>
    </reaction>
</comment>
<comment type="cofactor">
    <cofactor evidence="1">
        <name>Mg(2+)</name>
        <dbReference type="ChEBI" id="CHEBI:18420"/>
    </cofactor>
</comment>
<comment type="subunit">
    <text evidence="1">Monomer.</text>
</comment>
<comment type="similarity">
    <text evidence="1">Belongs to the IPP transferase family.</text>
</comment>
<keyword id="KW-0067">ATP-binding</keyword>
<keyword id="KW-0460">Magnesium</keyword>
<keyword id="KW-0547">Nucleotide-binding</keyword>
<keyword id="KW-0808">Transferase</keyword>
<keyword id="KW-0819">tRNA processing</keyword>
<accession>Q03KD9</accession>
<evidence type="ECO:0000255" key="1">
    <source>
        <dbReference type="HAMAP-Rule" id="MF_00185"/>
    </source>
</evidence>
<protein>
    <recommendedName>
        <fullName evidence="1">tRNA dimethylallyltransferase</fullName>
        <ecNumber evidence="1">2.5.1.75</ecNumber>
    </recommendedName>
    <alternativeName>
        <fullName evidence="1">Dimethylallyl diphosphate:tRNA dimethylallyltransferase</fullName>
        <shortName evidence="1">DMAPP:tRNA dimethylallyltransferase</shortName>
        <shortName evidence="1">DMATase</shortName>
    </alternativeName>
    <alternativeName>
        <fullName evidence="1">Isopentenyl-diphosphate:tRNA isopentenyltransferase</fullName>
        <shortName evidence="1">IPP transferase</shortName>
        <shortName evidence="1">IPPT</shortName>
        <shortName evidence="1">IPTase</shortName>
    </alternativeName>
</protein>
<feature type="chain" id="PRO_1000020677" description="tRNA dimethylallyltransferase">
    <location>
        <begin position="1"/>
        <end position="299"/>
    </location>
</feature>
<feature type="region of interest" description="Interaction with substrate tRNA" evidence="1">
    <location>
        <begin position="35"/>
        <end position="38"/>
    </location>
</feature>
<feature type="binding site" evidence="1">
    <location>
        <begin position="10"/>
        <end position="17"/>
    </location>
    <ligand>
        <name>ATP</name>
        <dbReference type="ChEBI" id="CHEBI:30616"/>
    </ligand>
</feature>
<feature type="binding site" evidence="1">
    <location>
        <begin position="12"/>
        <end position="17"/>
    </location>
    <ligand>
        <name>substrate</name>
    </ligand>
</feature>
<feature type="site" description="Interaction with substrate tRNA" evidence="1">
    <location>
        <position position="101"/>
    </location>
</feature>
<feature type="site" description="Interaction with substrate tRNA" evidence="1">
    <location>
        <position position="127"/>
    </location>
</feature>
<gene>
    <name evidence="1" type="primary">miaA</name>
    <name type="ordered locus">STER_1140</name>
</gene>
<sequence>MKTKLIVVAGPTAVGKTALGIELAERFNGEIISGDSQQVYRQLNIGTAKATPEEQAAAVHHLIDVRDVDESYSAYDFVTEAQAAITDIVSRGKLPIIVGGTGLYLQSLLEGYHLGGQVDQNQVLAYRSELEQLSDQQLFEKIDSLGIEIKEINRRRAIRALELYRFSDNLENTETCYEPFIIGLDDERSLIYDRINTRVDKMVELGLLEEAKWLYDNFSEAQSARGIGYKELFPYFSGEQTLDEALEKLKQNTRRFAKRQLTWFRNRMTVSFYQISSPEYPENVIQDLAIFLNEEEGEK</sequence>
<dbReference type="EC" id="2.5.1.75" evidence="1"/>
<dbReference type="EMBL" id="CP000419">
    <property type="protein sequence ID" value="ABJ66333.1"/>
    <property type="molecule type" value="Genomic_DNA"/>
</dbReference>
<dbReference type="RefSeq" id="WP_011681226.1">
    <property type="nucleotide sequence ID" value="NC_008532.1"/>
</dbReference>
<dbReference type="SMR" id="Q03KD9"/>
<dbReference type="KEGG" id="ste:STER_1140"/>
<dbReference type="HOGENOM" id="CLU_032616_0_1_9"/>
<dbReference type="GO" id="GO:0005524">
    <property type="term" value="F:ATP binding"/>
    <property type="evidence" value="ECO:0007669"/>
    <property type="project" value="UniProtKB-UniRule"/>
</dbReference>
<dbReference type="GO" id="GO:0052381">
    <property type="term" value="F:tRNA dimethylallyltransferase activity"/>
    <property type="evidence" value="ECO:0007669"/>
    <property type="project" value="UniProtKB-UniRule"/>
</dbReference>
<dbReference type="GO" id="GO:0006400">
    <property type="term" value="P:tRNA modification"/>
    <property type="evidence" value="ECO:0007669"/>
    <property type="project" value="TreeGrafter"/>
</dbReference>
<dbReference type="Gene3D" id="3.40.50.300">
    <property type="entry name" value="P-loop containing nucleotide triphosphate hydrolases"/>
    <property type="match status" value="1"/>
</dbReference>
<dbReference type="HAMAP" id="MF_00185">
    <property type="entry name" value="IPP_trans"/>
    <property type="match status" value="1"/>
</dbReference>
<dbReference type="InterPro" id="IPR039657">
    <property type="entry name" value="Dimethylallyltransferase"/>
</dbReference>
<dbReference type="InterPro" id="IPR018022">
    <property type="entry name" value="IPT"/>
</dbReference>
<dbReference type="InterPro" id="IPR027417">
    <property type="entry name" value="P-loop_NTPase"/>
</dbReference>
<dbReference type="NCBIfam" id="TIGR00174">
    <property type="entry name" value="miaA"/>
    <property type="match status" value="1"/>
</dbReference>
<dbReference type="PANTHER" id="PTHR11088">
    <property type="entry name" value="TRNA DIMETHYLALLYLTRANSFERASE"/>
    <property type="match status" value="1"/>
</dbReference>
<dbReference type="PANTHER" id="PTHR11088:SF60">
    <property type="entry name" value="TRNA DIMETHYLALLYLTRANSFERASE"/>
    <property type="match status" value="1"/>
</dbReference>
<dbReference type="Pfam" id="PF01715">
    <property type="entry name" value="IPPT"/>
    <property type="match status" value="1"/>
</dbReference>
<dbReference type="SUPFAM" id="SSF52540">
    <property type="entry name" value="P-loop containing nucleoside triphosphate hydrolases"/>
    <property type="match status" value="2"/>
</dbReference>
<reference key="1">
    <citation type="journal article" date="2006" name="Proc. Natl. Acad. Sci. U.S.A.">
        <title>Comparative genomics of the lactic acid bacteria.</title>
        <authorList>
            <person name="Makarova K.S."/>
            <person name="Slesarev A."/>
            <person name="Wolf Y.I."/>
            <person name="Sorokin A."/>
            <person name="Mirkin B."/>
            <person name="Koonin E.V."/>
            <person name="Pavlov A."/>
            <person name="Pavlova N."/>
            <person name="Karamychev V."/>
            <person name="Polouchine N."/>
            <person name="Shakhova V."/>
            <person name="Grigoriev I."/>
            <person name="Lou Y."/>
            <person name="Rohksar D."/>
            <person name="Lucas S."/>
            <person name="Huang K."/>
            <person name="Goodstein D.M."/>
            <person name="Hawkins T."/>
            <person name="Plengvidhya V."/>
            <person name="Welker D."/>
            <person name="Hughes J."/>
            <person name="Goh Y."/>
            <person name="Benson A."/>
            <person name="Baldwin K."/>
            <person name="Lee J.-H."/>
            <person name="Diaz-Muniz I."/>
            <person name="Dosti B."/>
            <person name="Smeianov V."/>
            <person name="Wechter W."/>
            <person name="Barabote R."/>
            <person name="Lorca G."/>
            <person name="Altermann E."/>
            <person name="Barrangou R."/>
            <person name="Ganesan B."/>
            <person name="Xie Y."/>
            <person name="Rawsthorne H."/>
            <person name="Tamir D."/>
            <person name="Parker C."/>
            <person name="Breidt F."/>
            <person name="Broadbent J.R."/>
            <person name="Hutkins R."/>
            <person name="O'Sullivan D."/>
            <person name="Steele J."/>
            <person name="Unlu G."/>
            <person name="Saier M.H. Jr."/>
            <person name="Klaenhammer T."/>
            <person name="Richardson P."/>
            <person name="Kozyavkin S."/>
            <person name="Weimer B.C."/>
            <person name="Mills D.A."/>
        </authorList>
    </citation>
    <scope>NUCLEOTIDE SEQUENCE [LARGE SCALE GENOMIC DNA]</scope>
    <source>
        <strain>ATCC BAA-491 / LMD-9</strain>
    </source>
</reference>